<name>MNMA_NEIM0</name>
<accession>A9M0Y5</accession>
<sequence>MNTTANTTNIIVGLSGGVDSSVTAALLKQQGYQVRGVFMQNWEDDDNDEYCSIKQDSFDAIAVADIIGIDIDIVNFAAQYKDKVFAYFLQEYSAGRTPNPDVLCNAEIKFKCFLDYAVGQGADTIATGHYARKEVRNGVHYLLKGLDRNKDQSYFLYRLKPFQLERAIFPLGGLEKPEVRRLAAEFNLPTAAKKDSTGICFIGERPFREFLQKYLPTDNGKMVTPEGKTVGEHVGLMFYTLGQRKGLGIGGAGEPWFVAAKDLTKNELIVVQGHDHPLLYTRSLVMNDLSFTLPERPKAGRYTCKTRYRMADAPCELRYLDDETAELVFDEPQWAVTPGQSAVLYDGDICLGGGIIQTTDKPVIITR</sequence>
<comment type="function">
    <text evidence="1">Catalyzes the 2-thiolation of uridine at the wobble position (U34) of tRNA, leading to the formation of s(2)U34.</text>
</comment>
<comment type="catalytic activity">
    <reaction evidence="1">
        <text>S-sulfanyl-L-cysteinyl-[protein] + uridine(34) in tRNA + AH2 + ATP = 2-thiouridine(34) in tRNA + L-cysteinyl-[protein] + A + AMP + diphosphate + H(+)</text>
        <dbReference type="Rhea" id="RHEA:47032"/>
        <dbReference type="Rhea" id="RHEA-COMP:10131"/>
        <dbReference type="Rhea" id="RHEA-COMP:11726"/>
        <dbReference type="Rhea" id="RHEA-COMP:11727"/>
        <dbReference type="Rhea" id="RHEA-COMP:11728"/>
        <dbReference type="ChEBI" id="CHEBI:13193"/>
        <dbReference type="ChEBI" id="CHEBI:15378"/>
        <dbReference type="ChEBI" id="CHEBI:17499"/>
        <dbReference type="ChEBI" id="CHEBI:29950"/>
        <dbReference type="ChEBI" id="CHEBI:30616"/>
        <dbReference type="ChEBI" id="CHEBI:33019"/>
        <dbReference type="ChEBI" id="CHEBI:61963"/>
        <dbReference type="ChEBI" id="CHEBI:65315"/>
        <dbReference type="ChEBI" id="CHEBI:87170"/>
        <dbReference type="ChEBI" id="CHEBI:456215"/>
        <dbReference type="EC" id="2.8.1.13"/>
    </reaction>
</comment>
<comment type="subcellular location">
    <subcellularLocation>
        <location evidence="1">Cytoplasm</location>
    </subcellularLocation>
</comment>
<comment type="similarity">
    <text evidence="1">Belongs to the MnmA/TRMU family.</text>
</comment>
<comment type="sequence caution" evidence="2">
    <conflict type="erroneous initiation">
        <sequence resource="EMBL-CDS" id="ABX73623"/>
    </conflict>
</comment>
<keyword id="KW-0067">ATP-binding</keyword>
<keyword id="KW-0963">Cytoplasm</keyword>
<keyword id="KW-1015">Disulfide bond</keyword>
<keyword id="KW-0547">Nucleotide-binding</keyword>
<keyword id="KW-0694">RNA-binding</keyword>
<keyword id="KW-0808">Transferase</keyword>
<keyword id="KW-0819">tRNA processing</keyword>
<keyword id="KW-0820">tRNA-binding</keyword>
<evidence type="ECO:0000255" key="1">
    <source>
        <dbReference type="HAMAP-Rule" id="MF_00144"/>
    </source>
</evidence>
<evidence type="ECO:0000305" key="2"/>
<dbReference type="EC" id="2.8.1.13" evidence="1"/>
<dbReference type="EMBL" id="CP000381">
    <property type="protein sequence ID" value="ABX73623.1"/>
    <property type="status" value="ALT_INIT"/>
    <property type="molecule type" value="Genomic_DNA"/>
</dbReference>
<dbReference type="RefSeq" id="WP_002230725.1">
    <property type="nucleotide sequence ID" value="NC_010120.1"/>
</dbReference>
<dbReference type="SMR" id="A9M0Y5"/>
<dbReference type="KEGG" id="nmn:NMCC_1458"/>
<dbReference type="HOGENOM" id="CLU_035188_1_0_4"/>
<dbReference type="Proteomes" id="UP000001177">
    <property type="component" value="Chromosome"/>
</dbReference>
<dbReference type="GO" id="GO:0005737">
    <property type="term" value="C:cytoplasm"/>
    <property type="evidence" value="ECO:0007669"/>
    <property type="project" value="UniProtKB-SubCell"/>
</dbReference>
<dbReference type="GO" id="GO:0005524">
    <property type="term" value="F:ATP binding"/>
    <property type="evidence" value="ECO:0007669"/>
    <property type="project" value="UniProtKB-KW"/>
</dbReference>
<dbReference type="GO" id="GO:0000049">
    <property type="term" value="F:tRNA binding"/>
    <property type="evidence" value="ECO:0007669"/>
    <property type="project" value="UniProtKB-KW"/>
</dbReference>
<dbReference type="GO" id="GO:0103016">
    <property type="term" value="F:tRNA-uridine 2-sulfurtransferase activity"/>
    <property type="evidence" value="ECO:0007669"/>
    <property type="project" value="UniProtKB-EC"/>
</dbReference>
<dbReference type="GO" id="GO:0002143">
    <property type="term" value="P:tRNA wobble position uridine thiolation"/>
    <property type="evidence" value="ECO:0007669"/>
    <property type="project" value="TreeGrafter"/>
</dbReference>
<dbReference type="CDD" id="cd01998">
    <property type="entry name" value="MnmA_TRMU-like"/>
    <property type="match status" value="1"/>
</dbReference>
<dbReference type="FunFam" id="2.30.30.280:FF:000001">
    <property type="entry name" value="tRNA-specific 2-thiouridylase MnmA"/>
    <property type="match status" value="1"/>
</dbReference>
<dbReference type="FunFam" id="2.40.30.10:FF:000023">
    <property type="entry name" value="tRNA-specific 2-thiouridylase MnmA"/>
    <property type="match status" value="1"/>
</dbReference>
<dbReference type="FunFam" id="3.40.50.620:FF:000004">
    <property type="entry name" value="tRNA-specific 2-thiouridylase MnmA"/>
    <property type="match status" value="1"/>
</dbReference>
<dbReference type="Gene3D" id="2.30.30.280">
    <property type="entry name" value="Adenine nucleotide alpha hydrolases-like domains"/>
    <property type="match status" value="1"/>
</dbReference>
<dbReference type="Gene3D" id="3.40.50.620">
    <property type="entry name" value="HUPs"/>
    <property type="match status" value="1"/>
</dbReference>
<dbReference type="Gene3D" id="2.40.30.10">
    <property type="entry name" value="Translation factors"/>
    <property type="match status" value="1"/>
</dbReference>
<dbReference type="HAMAP" id="MF_00144">
    <property type="entry name" value="tRNA_thiouridyl_MnmA"/>
    <property type="match status" value="1"/>
</dbReference>
<dbReference type="InterPro" id="IPR004506">
    <property type="entry name" value="MnmA-like"/>
</dbReference>
<dbReference type="InterPro" id="IPR046885">
    <property type="entry name" value="MnmA-like_C"/>
</dbReference>
<dbReference type="InterPro" id="IPR046884">
    <property type="entry name" value="MnmA-like_central"/>
</dbReference>
<dbReference type="InterPro" id="IPR023382">
    <property type="entry name" value="MnmA-like_central_sf"/>
</dbReference>
<dbReference type="InterPro" id="IPR014729">
    <property type="entry name" value="Rossmann-like_a/b/a_fold"/>
</dbReference>
<dbReference type="NCBIfam" id="NF001138">
    <property type="entry name" value="PRK00143.1"/>
    <property type="match status" value="1"/>
</dbReference>
<dbReference type="NCBIfam" id="TIGR00420">
    <property type="entry name" value="trmU"/>
    <property type="match status" value="1"/>
</dbReference>
<dbReference type="PANTHER" id="PTHR11933:SF5">
    <property type="entry name" value="MITOCHONDRIAL TRNA-SPECIFIC 2-THIOURIDYLASE 1"/>
    <property type="match status" value="1"/>
</dbReference>
<dbReference type="PANTHER" id="PTHR11933">
    <property type="entry name" value="TRNA 5-METHYLAMINOMETHYL-2-THIOURIDYLATE -METHYLTRANSFERASE"/>
    <property type="match status" value="1"/>
</dbReference>
<dbReference type="Pfam" id="PF03054">
    <property type="entry name" value="tRNA_Me_trans"/>
    <property type="match status" value="1"/>
</dbReference>
<dbReference type="Pfam" id="PF20258">
    <property type="entry name" value="tRNA_Me_trans_C"/>
    <property type="match status" value="1"/>
</dbReference>
<dbReference type="Pfam" id="PF20259">
    <property type="entry name" value="tRNA_Me_trans_M"/>
    <property type="match status" value="1"/>
</dbReference>
<dbReference type="SUPFAM" id="SSF52402">
    <property type="entry name" value="Adenine nucleotide alpha hydrolases-like"/>
    <property type="match status" value="1"/>
</dbReference>
<gene>
    <name evidence="1" type="primary">mnmA</name>
    <name type="ordered locus">NMCC_1458</name>
</gene>
<proteinExistence type="inferred from homology"/>
<feature type="chain" id="PRO_0000349712" description="tRNA-specific 2-thiouridylase MnmA">
    <location>
        <begin position="1"/>
        <end position="367"/>
    </location>
</feature>
<feature type="region of interest" description="Interaction with target base in tRNA" evidence="1">
    <location>
        <begin position="99"/>
        <end position="101"/>
    </location>
</feature>
<feature type="region of interest" description="Interaction with tRNA" evidence="1">
    <location>
        <begin position="150"/>
        <end position="152"/>
    </location>
</feature>
<feature type="region of interest" description="Interaction with tRNA" evidence="1">
    <location>
        <begin position="307"/>
        <end position="308"/>
    </location>
</feature>
<feature type="active site" description="Nucleophile" evidence="1">
    <location>
        <position position="104"/>
    </location>
</feature>
<feature type="active site" description="Cysteine persulfide intermediate" evidence="1">
    <location>
        <position position="200"/>
    </location>
</feature>
<feature type="binding site" evidence="1">
    <location>
        <begin position="13"/>
        <end position="20"/>
    </location>
    <ligand>
        <name>ATP</name>
        <dbReference type="ChEBI" id="CHEBI:30616"/>
    </ligand>
</feature>
<feature type="binding site" evidence="1">
    <location>
        <position position="39"/>
    </location>
    <ligand>
        <name>ATP</name>
        <dbReference type="ChEBI" id="CHEBI:30616"/>
    </ligand>
</feature>
<feature type="binding site" evidence="1">
    <location>
        <position position="128"/>
    </location>
    <ligand>
        <name>ATP</name>
        <dbReference type="ChEBI" id="CHEBI:30616"/>
    </ligand>
</feature>
<feature type="site" description="Interaction with tRNA" evidence="1">
    <location>
        <position position="129"/>
    </location>
</feature>
<feature type="site" description="Interaction with tRNA" evidence="1">
    <location>
        <position position="340"/>
    </location>
</feature>
<feature type="disulfide bond" description="Alternate" evidence="1">
    <location>
        <begin position="104"/>
        <end position="200"/>
    </location>
</feature>
<protein>
    <recommendedName>
        <fullName evidence="1">tRNA-specific 2-thiouridylase MnmA</fullName>
        <ecNumber evidence="1">2.8.1.13</ecNumber>
    </recommendedName>
</protein>
<organism>
    <name type="scientific">Neisseria meningitidis serogroup C (strain 053442)</name>
    <dbReference type="NCBI Taxonomy" id="374833"/>
    <lineage>
        <taxon>Bacteria</taxon>
        <taxon>Pseudomonadati</taxon>
        <taxon>Pseudomonadota</taxon>
        <taxon>Betaproteobacteria</taxon>
        <taxon>Neisseriales</taxon>
        <taxon>Neisseriaceae</taxon>
        <taxon>Neisseria</taxon>
    </lineage>
</organism>
<reference key="1">
    <citation type="journal article" date="2008" name="Genomics">
        <title>Characterization of ST-4821 complex, a unique Neisseria meningitidis clone.</title>
        <authorList>
            <person name="Peng J."/>
            <person name="Yang L."/>
            <person name="Yang F."/>
            <person name="Yang J."/>
            <person name="Yan Y."/>
            <person name="Nie H."/>
            <person name="Zhang X."/>
            <person name="Xiong Z."/>
            <person name="Jiang Y."/>
            <person name="Cheng F."/>
            <person name="Xu X."/>
            <person name="Chen S."/>
            <person name="Sun L."/>
            <person name="Li W."/>
            <person name="Shen Y."/>
            <person name="Shao Z."/>
            <person name="Liang X."/>
            <person name="Xu J."/>
            <person name="Jin Q."/>
        </authorList>
    </citation>
    <scope>NUCLEOTIDE SEQUENCE [LARGE SCALE GENOMIC DNA]</scope>
    <source>
        <strain>053442</strain>
    </source>
</reference>